<evidence type="ECO:0000255" key="1">
    <source>
        <dbReference type="HAMAP-Rule" id="MF_00222"/>
    </source>
</evidence>
<dbReference type="EC" id="1.1.1.25" evidence="1"/>
<dbReference type="EMBL" id="AE008691">
    <property type="protein sequence ID" value="AAM24485.1"/>
    <property type="molecule type" value="Genomic_DNA"/>
</dbReference>
<dbReference type="RefSeq" id="WP_009610692.1">
    <property type="nucleotide sequence ID" value="NC_003869.1"/>
</dbReference>
<dbReference type="SMR" id="Q8RAG2"/>
<dbReference type="STRING" id="273068.TTE1261"/>
<dbReference type="KEGG" id="tte:TTE1261"/>
<dbReference type="eggNOG" id="COG0169">
    <property type="taxonomic scope" value="Bacteria"/>
</dbReference>
<dbReference type="HOGENOM" id="CLU_044063_4_1_9"/>
<dbReference type="OrthoDB" id="9792692at2"/>
<dbReference type="UniPathway" id="UPA00053">
    <property type="reaction ID" value="UER00087"/>
</dbReference>
<dbReference type="Proteomes" id="UP000000555">
    <property type="component" value="Chromosome"/>
</dbReference>
<dbReference type="GO" id="GO:0050661">
    <property type="term" value="F:NADP binding"/>
    <property type="evidence" value="ECO:0007669"/>
    <property type="project" value="InterPro"/>
</dbReference>
<dbReference type="GO" id="GO:0004764">
    <property type="term" value="F:shikimate 3-dehydrogenase (NADP+) activity"/>
    <property type="evidence" value="ECO:0007669"/>
    <property type="project" value="UniProtKB-UniRule"/>
</dbReference>
<dbReference type="GO" id="GO:0008652">
    <property type="term" value="P:amino acid biosynthetic process"/>
    <property type="evidence" value="ECO:0007669"/>
    <property type="project" value="UniProtKB-KW"/>
</dbReference>
<dbReference type="GO" id="GO:0009073">
    <property type="term" value="P:aromatic amino acid family biosynthetic process"/>
    <property type="evidence" value="ECO:0007669"/>
    <property type="project" value="UniProtKB-KW"/>
</dbReference>
<dbReference type="GO" id="GO:0009423">
    <property type="term" value="P:chorismate biosynthetic process"/>
    <property type="evidence" value="ECO:0007669"/>
    <property type="project" value="UniProtKB-UniRule"/>
</dbReference>
<dbReference type="GO" id="GO:0019632">
    <property type="term" value="P:shikimate metabolic process"/>
    <property type="evidence" value="ECO:0007669"/>
    <property type="project" value="InterPro"/>
</dbReference>
<dbReference type="CDD" id="cd01065">
    <property type="entry name" value="NAD_bind_Shikimate_DH"/>
    <property type="match status" value="1"/>
</dbReference>
<dbReference type="FunFam" id="3.40.50.10860:FF:000004">
    <property type="entry name" value="Quinate/shikimate dehydrogenase"/>
    <property type="match status" value="1"/>
</dbReference>
<dbReference type="FunFam" id="3.40.50.720:FF:000086">
    <property type="entry name" value="Quinate/shikimate dehydrogenase"/>
    <property type="match status" value="1"/>
</dbReference>
<dbReference type="Gene3D" id="3.40.50.10860">
    <property type="entry name" value="Leucine Dehydrogenase, chain A, domain 1"/>
    <property type="match status" value="1"/>
</dbReference>
<dbReference type="Gene3D" id="3.40.50.720">
    <property type="entry name" value="NAD(P)-binding Rossmann-like Domain"/>
    <property type="match status" value="1"/>
</dbReference>
<dbReference type="HAMAP" id="MF_00222">
    <property type="entry name" value="Shikimate_DH_AroE"/>
    <property type="match status" value="1"/>
</dbReference>
<dbReference type="InterPro" id="IPR046346">
    <property type="entry name" value="Aminoacid_DH-like_N_sf"/>
</dbReference>
<dbReference type="InterPro" id="IPR036291">
    <property type="entry name" value="NAD(P)-bd_dom_sf"/>
</dbReference>
<dbReference type="InterPro" id="IPR041121">
    <property type="entry name" value="SDH_C"/>
</dbReference>
<dbReference type="InterPro" id="IPR011342">
    <property type="entry name" value="Shikimate_DH"/>
</dbReference>
<dbReference type="InterPro" id="IPR013708">
    <property type="entry name" value="Shikimate_DH-bd_N"/>
</dbReference>
<dbReference type="InterPro" id="IPR022893">
    <property type="entry name" value="Shikimate_DH_fam"/>
</dbReference>
<dbReference type="InterPro" id="IPR006151">
    <property type="entry name" value="Shikm_DH/Glu-tRNA_Rdtase"/>
</dbReference>
<dbReference type="NCBIfam" id="TIGR00507">
    <property type="entry name" value="aroE"/>
    <property type="match status" value="1"/>
</dbReference>
<dbReference type="NCBIfam" id="NF001314">
    <property type="entry name" value="PRK00258.2-2"/>
    <property type="match status" value="1"/>
</dbReference>
<dbReference type="NCBIfam" id="NF001319">
    <property type="entry name" value="PRK00258.3-3"/>
    <property type="match status" value="1"/>
</dbReference>
<dbReference type="PANTHER" id="PTHR21089:SF1">
    <property type="entry name" value="BIFUNCTIONAL 3-DEHYDROQUINATE DEHYDRATASE_SHIKIMATE DEHYDROGENASE, CHLOROPLASTIC"/>
    <property type="match status" value="1"/>
</dbReference>
<dbReference type="PANTHER" id="PTHR21089">
    <property type="entry name" value="SHIKIMATE DEHYDROGENASE"/>
    <property type="match status" value="1"/>
</dbReference>
<dbReference type="Pfam" id="PF18317">
    <property type="entry name" value="SDH_C"/>
    <property type="match status" value="1"/>
</dbReference>
<dbReference type="Pfam" id="PF01488">
    <property type="entry name" value="Shikimate_DH"/>
    <property type="match status" value="1"/>
</dbReference>
<dbReference type="Pfam" id="PF08501">
    <property type="entry name" value="Shikimate_dh_N"/>
    <property type="match status" value="1"/>
</dbReference>
<dbReference type="SUPFAM" id="SSF53223">
    <property type="entry name" value="Aminoacid dehydrogenase-like, N-terminal domain"/>
    <property type="match status" value="1"/>
</dbReference>
<dbReference type="SUPFAM" id="SSF51735">
    <property type="entry name" value="NAD(P)-binding Rossmann-fold domains"/>
    <property type="match status" value="1"/>
</dbReference>
<proteinExistence type="inferred from homology"/>
<name>AROE_CALS4</name>
<keyword id="KW-0028">Amino-acid biosynthesis</keyword>
<keyword id="KW-0057">Aromatic amino acid biosynthesis</keyword>
<keyword id="KW-0521">NADP</keyword>
<keyword id="KW-0560">Oxidoreductase</keyword>
<keyword id="KW-1185">Reference proteome</keyword>
<organism>
    <name type="scientific">Caldanaerobacter subterraneus subsp. tengcongensis (strain DSM 15242 / JCM 11007 / NBRC 100824 / MB4)</name>
    <name type="common">Thermoanaerobacter tengcongensis</name>
    <dbReference type="NCBI Taxonomy" id="273068"/>
    <lineage>
        <taxon>Bacteria</taxon>
        <taxon>Bacillati</taxon>
        <taxon>Bacillota</taxon>
        <taxon>Clostridia</taxon>
        <taxon>Thermoanaerobacterales</taxon>
        <taxon>Thermoanaerobacteraceae</taxon>
        <taxon>Caldanaerobacter</taxon>
    </lineage>
</organism>
<protein>
    <recommendedName>
        <fullName evidence="1">Shikimate dehydrogenase (NADP(+))</fullName>
        <shortName evidence="1">SDH</shortName>
        <ecNumber evidence="1">1.1.1.25</ecNumber>
    </recommendedName>
</protein>
<gene>
    <name evidence="1" type="primary">aroE</name>
    <name type="ordered locus">TTE1261</name>
</gene>
<comment type="function">
    <text evidence="1">Involved in the biosynthesis of the chorismate, which leads to the biosynthesis of aromatic amino acids. Catalyzes the reversible NADPH linked reduction of 3-dehydroshikimate (DHSA) to yield shikimate (SA).</text>
</comment>
<comment type="catalytic activity">
    <reaction evidence="1">
        <text>shikimate + NADP(+) = 3-dehydroshikimate + NADPH + H(+)</text>
        <dbReference type="Rhea" id="RHEA:17737"/>
        <dbReference type="ChEBI" id="CHEBI:15378"/>
        <dbReference type="ChEBI" id="CHEBI:16630"/>
        <dbReference type="ChEBI" id="CHEBI:36208"/>
        <dbReference type="ChEBI" id="CHEBI:57783"/>
        <dbReference type="ChEBI" id="CHEBI:58349"/>
        <dbReference type="EC" id="1.1.1.25"/>
    </reaction>
</comment>
<comment type="pathway">
    <text evidence="1">Metabolic intermediate biosynthesis; chorismate biosynthesis; chorismate from D-erythrose 4-phosphate and phosphoenolpyruvate: step 4/7.</text>
</comment>
<comment type="subunit">
    <text evidence="1">Homodimer.</text>
</comment>
<comment type="similarity">
    <text evidence="1">Belongs to the shikimate dehydrogenase family.</text>
</comment>
<reference key="1">
    <citation type="journal article" date="2002" name="Genome Res.">
        <title>A complete sequence of the T. tengcongensis genome.</title>
        <authorList>
            <person name="Bao Q."/>
            <person name="Tian Y."/>
            <person name="Li W."/>
            <person name="Xu Z."/>
            <person name="Xuan Z."/>
            <person name="Hu S."/>
            <person name="Dong W."/>
            <person name="Yang J."/>
            <person name="Chen Y."/>
            <person name="Xue Y."/>
            <person name="Xu Y."/>
            <person name="Lai X."/>
            <person name="Huang L."/>
            <person name="Dong X."/>
            <person name="Ma Y."/>
            <person name="Ling L."/>
            <person name="Tan H."/>
            <person name="Chen R."/>
            <person name="Wang J."/>
            <person name="Yu J."/>
            <person name="Yang H."/>
        </authorList>
    </citation>
    <scope>NUCLEOTIDE SEQUENCE [LARGE SCALE GENOMIC DNA]</scope>
    <source>
        <strain>DSM 15242 / JCM 11007 / NBRC 100824 / MB4</strain>
    </source>
</reference>
<sequence>MKIDSTTKVFGLIGHPVKHSLSPLIHNSSFEKLNFNGVYVVFDVAPELLENAVKGLKALGIKGFNVTVPHKESVMNYLDFVTEEAEKIGAVNTVVNENGILKGYNTDVQGFIDSLKELKEDVRGRKAFVLGAGGASKAICFALAREGVESIVIANRTLNKAKALAEYIREEFKMKCDYCSIEEVEKFNEIDILINTTSVGMHPEVGNSPVSEEVVAKANFVYDLIYNPSETLFLKYARKNGVKSANGLSMLVNQASYAFYLWTGEFFDKDFVYEKIRGEM</sequence>
<accession>Q8RAG2</accession>
<feature type="chain" id="PRO_0000136047" description="Shikimate dehydrogenase (NADP(+))">
    <location>
        <begin position="1"/>
        <end position="280"/>
    </location>
</feature>
<feature type="active site" description="Proton acceptor" evidence="1">
    <location>
        <position position="71"/>
    </location>
</feature>
<feature type="binding site" evidence="1">
    <location>
        <begin position="20"/>
        <end position="22"/>
    </location>
    <ligand>
        <name>shikimate</name>
        <dbReference type="ChEBI" id="CHEBI:36208"/>
    </ligand>
</feature>
<feature type="binding site" evidence="1">
    <location>
        <position position="67"/>
    </location>
    <ligand>
        <name>shikimate</name>
        <dbReference type="ChEBI" id="CHEBI:36208"/>
    </ligand>
</feature>
<feature type="binding site" evidence="1">
    <location>
        <position position="83"/>
    </location>
    <ligand>
        <name>NADP(+)</name>
        <dbReference type="ChEBI" id="CHEBI:58349"/>
    </ligand>
</feature>
<feature type="binding site" evidence="1">
    <location>
        <position position="92"/>
    </location>
    <ligand>
        <name>shikimate</name>
        <dbReference type="ChEBI" id="CHEBI:36208"/>
    </ligand>
</feature>
<feature type="binding site" evidence="1">
    <location>
        <position position="107"/>
    </location>
    <ligand>
        <name>shikimate</name>
        <dbReference type="ChEBI" id="CHEBI:36208"/>
    </ligand>
</feature>
<feature type="binding site" evidence="1">
    <location>
        <begin position="131"/>
        <end position="135"/>
    </location>
    <ligand>
        <name>NADP(+)</name>
        <dbReference type="ChEBI" id="CHEBI:58349"/>
    </ligand>
</feature>
<feature type="binding site" evidence="1">
    <location>
        <begin position="155"/>
        <end position="160"/>
    </location>
    <ligand>
        <name>NADP(+)</name>
        <dbReference type="ChEBI" id="CHEBI:58349"/>
    </ligand>
</feature>
<feature type="binding site" evidence="1">
    <location>
        <position position="224"/>
    </location>
    <ligand>
        <name>NADP(+)</name>
        <dbReference type="ChEBI" id="CHEBI:58349"/>
    </ligand>
</feature>
<feature type="binding site" evidence="1">
    <location>
        <position position="226"/>
    </location>
    <ligand>
        <name>shikimate</name>
        <dbReference type="ChEBI" id="CHEBI:36208"/>
    </ligand>
</feature>
<feature type="binding site" evidence="1">
    <location>
        <position position="247"/>
    </location>
    <ligand>
        <name>NADP(+)</name>
        <dbReference type="ChEBI" id="CHEBI:58349"/>
    </ligand>
</feature>